<name>RS15_GEOUR</name>
<organism>
    <name type="scientific">Geotalea uraniireducens (strain Rf4)</name>
    <name type="common">Geobacter uraniireducens</name>
    <dbReference type="NCBI Taxonomy" id="351605"/>
    <lineage>
        <taxon>Bacteria</taxon>
        <taxon>Pseudomonadati</taxon>
        <taxon>Thermodesulfobacteriota</taxon>
        <taxon>Desulfuromonadia</taxon>
        <taxon>Geobacterales</taxon>
        <taxon>Geobacteraceae</taxon>
        <taxon>Geotalea</taxon>
    </lineage>
</organism>
<gene>
    <name evidence="1" type="primary">rpsO</name>
    <name type="ordered locus">Gura_1905</name>
</gene>
<sequence>MLATDKKQEIISTYKLHDSDTGSPEVQIAILTERITYLTEHFKTHKKDHHSRRGLLKIVGQRRGLLDYLKKKDVERYRSIIEKLGIRR</sequence>
<dbReference type="EMBL" id="CP000698">
    <property type="protein sequence ID" value="ABQ26095.1"/>
    <property type="molecule type" value="Genomic_DNA"/>
</dbReference>
<dbReference type="RefSeq" id="WP_011938798.1">
    <property type="nucleotide sequence ID" value="NC_009483.1"/>
</dbReference>
<dbReference type="SMR" id="A5GF90"/>
<dbReference type="STRING" id="351605.Gura_1905"/>
<dbReference type="KEGG" id="gur:Gura_1905"/>
<dbReference type="HOGENOM" id="CLU_148518_0_0_7"/>
<dbReference type="OrthoDB" id="9799262at2"/>
<dbReference type="Proteomes" id="UP000006695">
    <property type="component" value="Chromosome"/>
</dbReference>
<dbReference type="GO" id="GO:0022627">
    <property type="term" value="C:cytosolic small ribosomal subunit"/>
    <property type="evidence" value="ECO:0007669"/>
    <property type="project" value="TreeGrafter"/>
</dbReference>
<dbReference type="GO" id="GO:0019843">
    <property type="term" value="F:rRNA binding"/>
    <property type="evidence" value="ECO:0007669"/>
    <property type="project" value="UniProtKB-UniRule"/>
</dbReference>
<dbReference type="GO" id="GO:0003735">
    <property type="term" value="F:structural constituent of ribosome"/>
    <property type="evidence" value="ECO:0007669"/>
    <property type="project" value="InterPro"/>
</dbReference>
<dbReference type="GO" id="GO:0006412">
    <property type="term" value="P:translation"/>
    <property type="evidence" value="ECO:0007669"/>
    <property type="project" value="UniProtKB-UniRule"/>
</dbReference>
<dbReference type="CDD" id="cd00353">
    <property type="entry name" value="Ribosomal_S15p_S13e"/>
    <property type="match status" value="1"/>
</dbReference>
<dbReference type="FunFam" id="1.10.287.10:FF:000002">
    <property type="entry name" value="30S ribosomal protein S15"/>
    <property type="match status" value="1"/>
</dbReference>
<dbReference type="Gene3D" id="6.10.250.3130">
    <property type="match status" value="1"/>
</dbReference>
<dbReference type="Gene3D" id="1.10.287.10">
    <property type="entry name" value="S15/NS1, RNA-binding"/>
    <property type="match status" value="1"/>
</dbReference>
<dbReference type="HAMAP" id="MF_01343_B">
    <property type="entry name" value="Ribosomal_uS15_B"/>
    <property type="match status" value="1"/>
</dbReference>
<dbReference type="InterPro" id="IPR000589">
    <property type="entry name" value="Ribosomal_uS15"/>
</dbReference>
<dbReference type="InterPro" id="IPR005290">
    <property type="entry name" value="Ribosomal_uS15_bac-type"/>
</dbReference>
<dbReference type="InterPro" id="IPR009068">
    <property type="entry name" value="uS15_NS1_RNA-bd_sf"/>
</dbReference>
<dbReference type="NCBIfam" id="TIGR00952">
    <property type="entry name" value="S15_bact"/>
    <property type="match status" value="1"/>
</dbReference>
<dbReference type="PANTHER" id="PTHR23321">
    <property type="entry name" value="RIBOSOMAL PROTEIN S15, BACTERIAL AND ORGANELLAR"/>
    <property type="match status" value="1"/>
</dbReference>
<dbReference type="PANTHER" id="PTHR23321:SF26">
    <property type="entry name" value="SMALL RIBOSOMAL SUBUNIT PROTEIN US15M"/>
    <property type="match status" value="1"/>
</dbReference>
<dbReference type="Pfam" id="PF00312">
    <property type="entry name" value="Ribosomal_S15"/>
    <property type="match status" value="1"/>
</dbReference>
<dbReference type="SMART" id="SM01387">
    <property type="entry name" value="Ribosomal_S15"/>
    <property type="match status" value="1"/>
</dbReference>
<dbReference type="SUPFAM" id="SSF47060">
    <property type="entry name" value="S15/NS1 RNA-binding domain"/>
    <property type="match status" value="1"/>
</dbReference>
<dbReference type="PROSITE" id="PS00362">
    <property type="entry name" value="RIBOSOMAL_S15"/>
    <property type="match status" value="1"/>
</dbReference>
<proteinExistence type="inferred from homology"/>
<feature type="chain" id="PRO_1000086803" description="Small ribosomal subunit protein uS15">
    <location>
        <begin position="1"/>
        <end position="88"/>
    </location>
</feature>
<accession>A5GF90</accession>
<comment type="function">
    <text evidence="1">One of the primary rRNA binding proteins, it binds directly to 16S rRNA where it helps nucleate assembly of the platform of the 30S subunit by binding and bridging several RNA helices of the 16S rRNA.</text>
</comment>
<comment type="function">
    <text evidence="1">Forms an intersubunit bridge (bridge B4) with the 23S rRNA of the 50S subunit in the ribosome.</text>
</comment>
<comment type="subunit">
    <text evidence="1">Part of the 30S ribosomal subunit. Forms a bridge to the 50S subunit in the 70S ribosome, contacting the 23S rRNA.</text>
</comment>
<comment type="similarity">
    <text evidence="1">Belongs to the universal ribosomal protein uS15 family.</text>
</comment>
<evidence type="ECO:0000255" key="1">
    <source>
        <dbReference type="HAMAP-Rule" id="MF_01343"/>
    </source>
</evidence>
<evidence type="ECO:0000305" key="2"/>
<keyword id="KW-1185">Reference proteome</keyword>
<keyword id="KW-0687">Ribonucleoprotein</keyword>
<keyword id="KW-0689">Ribosomal protein</keyword>
<keyword id="KW-0694">RNA-binding</keyword>
<keyword id="KW-0699">rRNA-binding</keyword>
<protein>
    <recommendedName>
        <fullName evidence="1">Small ribosomal subunit protein uS15</fullName>
    </recommendedName>
    <alternativeName>
        <fullName evidence="2">30S ribosomal protein S15</fullName>
    </alternativeName>
</protein>
<reference key="1">
    <citation type="submission" date="2007-05" db="EMBL/GenBank/DDBJ databases">
        <title>Complete sequence of Geobacter uraniireducens Rf4.</title>
        <authorList>
            <consortium name="US DOE Joint Genome Institute"/>
            <person name="Copeland A."/>
            <person name="Lucas S."/>
            <person name="Lapidus A."/>
            <person name="Barry K."/>
            <person name="Detter J.C."/>
            <person name="Glavina del Rio T."/>
            <person name="Hammon N."/>
            <person name="Israni S."/>
            <person name="Dalin E."/>
            <person name="Tice H."/>
            <person name="Pitluck S."/>
            <person name="Chertkov O."/>
            <person name="Brettin T."/>
            <person name="Bruce D."/>
            <person name="Han C."/>
            <person name="Schmutz J."/>
            <person name="Larimer F."/>
            <person name="Land M."/>
            <person name="Hauser L."/>
            <person name="Kyrpides N."/>
            <person name="Mikhailova N."/>
            <person name="Shelobolina E."/>
            <person name="Aklujkar M."/>
            <person name="Lovley D."/>
            <person name="Richardson P."/>
        </authorList>
    </citation>
    <scope>NUCLEOTIDE SEQUENCE [LARGE SCALE GENOMIC DNA]</scope>
    <source>
        <strain>ATCC BAA-1134 / JCM 13001 / Rf4</strain>
    </source>
</reference>